<proteinExistence type="inferred from homology"/>
<comment type="function">
    <text evidence="1">Nucleotidyltransferase involved in the post-translational modification of proteins. It can catalyze the addition of adenosine monophosphate (AMP) or uridine monophosphate (UMP) to a protein, resulting in modifications known as AMPylation and UMPylation.</text>
</comment>
<comment type="catalytic activity">
    <reaction evidence="1">
        <text>L-seryl-[protein] + ATP = 3-O-(5'-adenylyl)-L-seryl-[protein] + diphosphate</text>
        <dbReference type="Rhea" id="RHEA:58120"/>
        <dbReference type="Rhea" id="RHEA-COMP:9863"/>
        <dbReference type="Rhea" id="RHEA-COMP:15073"/>
        <dbReference type="ChEBI" id="CHEBI:29999"/>
        <dbReference type="ChEBI" id="CHEBI:30616"/>
        <dbReference type="ChEBI" id="CHEBI:33019"/>
        <dbReference type="ChEBI" id="CHEBI:142516"/>
        <dbReference type="EC" id="2.7.7.108"/>
    </reaction>
</comment>
<comment type="catalytic activity">
    <reaction evidence="1">
        <text>L-threonyl-[protein] + ATP = 3-O-(5'-adenylyl)-L-threonyl-[protein] + diphosphate</text>
        <dbReference type="Rhea" id="RHEA:54292"/>
        <dbReference type="Rhea" id="RHEA-COMP:11060"/>
        <dbReference type="Rhea" id="RHEA-COMP:13847"/>
        <dbReference type="ChEBI" id="CHEBI:30013"/>
        <dbReference type="ChEBI" id="CHEBI:30616"/>
        <dbReference type="ChEBI" id="CHEBI:33019"/>
        <dbReference type="ChEBI" id="CHEBI:138113"/>
        <dbReference type="EC" id="2.7.7.108"/>
    </reaction>
</comment>
<comment type="catalytic activity">
    <reaction evidence="1">
        <text>L-tyrosyl-[protein] + ATP = O-(5'-adenylyl)-L-tyrosyl-[protein] + diphosphate</text>
        <dbReference type="Rhea" id="RHEA:54288"/>
        <dbReference type="Rhea" id="RHEA-COMP:10136"/>
        <dbReference type="Rhea" id="RHEA-COMP:13846"/>
        <dbReference type="ChEBI" id="CHEBI:30616"/>
        <dbReference type="ChEBI" id="CHEBI:33019"/>
        <dbReference type="ChEBI" id="CHEBI:46858"/>
        <dbReference type="ChEBI" id="CHEBI:83624"/>
        <dbReference type="EC" id="2.7.7.108"/>
    </reaction>
</comment>
<comment type="catalytic activity">
    <reaction evidence="1">
        <text>L-histidyl-[protein] + UTP = N(tele)-(5'-uridylyl)-L-histidyl-[protein] + diphosphate</text>
        <dbReference type="Rhea" id="RHEA:83891"/>
        <dbReference type="Rhea" id="RHEA-COMP:9745"/>
        <dbReference type="Rhea" id="RHEA-COMP:20239"/>
        <dbReference type="ChEBI" id="CHEBI:29979"/>
        <dbReference type="ChEBI" id="CHEBI:33019"/>
        <dbReference type="ChEBI" id="CHEBI:46398"/>
        <dbReference type="ChEBI" id="CHEBI:233474"/>
    </reaction>
</comment>
<comment type="catalytic activity">
    <reaction evidence="1">
        <text>L-seryl-[protein] + UTP = O-(5'-uridylyl)-L-seryl-[protein] + diphosphate</text>
        <dbReference type="Rhea" id="RHEA:64604"/>
        <dbReference type="Rhea" id="RHEA-COMP:9863"/>
        <dbReference type="Rhea" id="RHEA-COMP:16635"/>
        <dbReference type="ChEBI" id="CHEBI:29999"/>
        <dbReference type="ChEBI" id="CHEBI:33019"/>
        <dbReference type="ChEBI" id="CHEBI:46398"/>
        <dbReference type="ChEBI" id="CHEBI:156051"/>
    </reaction>
</comment>
<comment type="catalytic activity">
    <reaction evidence="1">
        <text>L-tyrosyl-[protein] + UTP = O-(5'-uridylyl)-L-tyrosyl-[protein] + diphosphate</text>
        <dbReference type="Rhea" id="RHEA:83887"/>
        <dbReference type="Rhea" id="RHEA-COMP:10136"/>
        <dbReference type="Rhea" id="RHEA-COMP:20238"/>
        <dbReference type="ChEBI" id="CHEBI:33019"/>
        <dbReference type="ChEBI" id="CHEBI:46398"/>
        <dbReference type="ChEBI" id="CHEBI:46858"/>
        <dbReference type="ChEBI" id="CHEBI:90602"/>
    </reaction>
</comment>
<comment type="cofactor">
    <cofactor evidence="1">
        <name>Mg(2+)</name>
        <dbReference type="ChEBI" id="CHEBI:18420"/>
    </cofactor>
    <cofactor evidence="1">
        <name>Mn(2+)</name>
        <dbReference type="ChEBI" id="CHEBI:29035"/>
    </cofactor>
</comment>
<comment type="similarity">
    <text evidence="1">Belongs to the SELO family.</text>
</comment>
<evidence type="ECO:0000255" key="1">
    <source>
        <dbReference type="HAMAP-Rule" id="MF_00692"/>
    </source>
</evidence>
<dbReference type="EC" id="2.7.7.-" evidence="1"/>
<dbReference type="EC" id="2.7.7.108" evidence="1"/>
<dbReference type="EMBL" id="CP000783">
    <property type="protein sequence ID" value="ABU77354.1"/>
    <property type="molecule type" value="Genomic_DNA"/>
</dbReference>
<dbReference type="RefSeq" id="WP_012124988.1">
    <property type="nucleotide sequence ID" value="NC_009778.1"/>
</dbReference>
<dbReference type="SMR" id="A7MNZ6"/>
<dbReference type="KEGG" id="esa:ESA_02105"/>
<dbReference type="PATRIC" id="fig|290339.8.peg.1880"/>
<dbReference type="HOGENOM" id="CLU_010245_4_0_6"/>
<dbReference type="Proteomes" id="UP000000260">
    <property type="component" value="Chromosome"/>
</dbReference>
<dbReference type="GO" id="GO:0070733">
    <property type="term" value="F:AMPylase activity"/>
    <property type="evidence" value="ECO:0007669"/>
    <property type="project" value="TreeGrafter"/>
</dbReference>
<dbReference type="GO" id="GO:0005524">
    <property type="term" value="F:ATP binding"/>
    <property type="evidence" value="ECO:0007669"/>
    <property type="project" value="UniProtKB-UniRule"/>
</dbReference>
<dbReference type="GO" id="GO:0000287">
    <property type="term" value="F:magnesium ion binding"/>
    <property type="evidence" value="ECO:0007669"/>
    <property type="project" value="UniProtKB-UniRule"/>
</dbReference>
<dbReference type="HAMAP" id="MF_00692">
    <property type="entry name" value="YdiU_SelO"/>
    <property type="match status" value="1"/>
</dbReference>
<dbReference type="InterPro" id="IPR054838">
    <property type="entry name" value="adnlytase_SelO"/>
</dbReference>
<dbReference type="InterPro" id="IPR003846">
    <property type="entry name" value="SelO"/>
</dbReference>
<dbReference type="NCBIfam" id="NF040880">
    <property type="entry name" value="adnlytase_SelO"/>
    <property type="match status" value="1"/>
</dbReference>
<dbReference type="NCBIfam" id="NF000658">
    <property type="entry name" value="PRK00029.1"/>
    <property type="match status" value="1"/>
</dbReference>
<dbReference type="PANTHER" id="PTHR32057">
    <property type="entry name" value="PROTEIN ADENYLYLTRANSFERASE SELO, MITOCHONDRIAL"/>
    <property type="match status" value="1"/>
</dbReference>
<dbReference type="PANTHER" id="PTHR32057:SF14">
    <property type="entry name" value="PROTEIN ADENYLYLTRANSFERASE SELO, MITOCHONDRIAL"/>
    <property type="match status" value="1"/>
</dbReference>
<dbReference type="Pfam" id="PF02696">
    <property type="entry name" value="SelO"/>
    <property type="match status" value="1"/>
</dbReference>
<gene>
    <name evidence="1" type="primary">ydiU</name>
    <name evidence="1" type="synonym">selO</name>
    <name type="ordered locus">ESA_02105</name>
</gene>
<name>SELO_CROS8</name>
<feature type="chain" id="PRO_1000212591" description="Protein nucleotidyltransferase YdiU">
    <location>
        <begin position="1"/>
        <end position="482"/>
    </location>
</feature>
<feature type="active site" description="Proton acceptor" evidence="1">
    <location>
        <position position="250"/>
    </location>
</feature>
<feature type="binding site" evidence="1">
    <location>
        <position position="88"/>
    </location>
    <ligand>
        <name>ATP</name>
        <dbReference type="ChEBI" id="CHEBI:30616"/>
    </ligand>
</feature>
<feature type="binding site" evidence="1">
    <location>
        <position position="90"/>
    </location>
    <ligand>
        <name>ATP</name>
        <dbReference type="ChEBI" id="CHEBI:30616"/>
    </ligand>
</feature>
<feature type="binding site" evidence="1">
    <location>
        <position position="91"/>
    </location>
    <ligand>
        <name>ATP</name>
        <dbReference type="ChEBI" id="CHEBI:30616"/>
    </ligand>
</feature>
<feature type="binding site" evidence="1">
    <location>
        <position position="111"/>
    </location>
    <ligand>
        <name>ATP</name>
        <dbReference type="ChEBI" id="CHEBI:30616"/>
    </ligand>
</feature>
<feature type="binding site" evidence="1">
    <location>
        <position position="123"/>
    </location>
    <ligand>
        <name>ATP</name>
        <dbReference type="ChEBI" id="CHEBI:30616"/>
    </ligand>
</feature>
<feature type="binding site" evidence="1">
    <location>
        <position position="124"/>
    </location>
    <ligand>
        <name>ATP</name>
        <dbReference type="ChEBI" id="CHEBI:30616"/>
    </ligand>
</feature>
<feature type="binding site" evidence="1">
    <location>
        <position position="174"/>
    </location>
    <ligand>
        <name>ATP</name>
        <dbReference type="ChEBI" id="CHEBI:30616"/>
    </ligand>
</feature>
<feature type="binding site" evidence="1">
    <location>
        <position position="181"/>
    </location>
    <ligand>
        <name>ATP</name>
        <dbReference type="ChEBI" id="CHEBI:30616"/>
    </ligand>
</feature>
<feature type="binding site" evidence="1">
    <location>
        <position position="251"/>
    </location>
    <ligand>
        <name>Mg(2+)</name>
        <dbReference type="ChEBI" id="CHEBI:18420"/>
    </ligand>
</feature>
<feature type="binding site" evidence="1">
    <location>
        <position position="260"/>
    </location>
    <ligand>
        <name>ATP</name>
        <dbReference type="ChEBI" id="CHEBI:30616"/>
    </ligand>
</feature>
<feature type="binding site" evidence="1">
    <location>
        <position position="260"/>
    </location>
    <ligand>
        <name>Mg(2+)</name>
        <dbReference type="ChEBI" id="CHEBI:18420"/>
    </ligand>
</feature>
<reference key="1">
    <citation type="journal article" date="2010" name="PLoS ONE">
        <title>Genome sequence of Cronobacter sakazakii BAA-894 and comparative genomic hybridization analysis with other Cronobacter species.</title>
        <authorList>
            <person name="Kucerova E."/>
            <person name="Clifton S.W."/>
            <person name="Xia X.Q."/>
            <person name="Long F."/>
            <person name="Porwollik S."/>
            <person name="Fulton L."/>
            <person name="Fronick C."/>
            <person name="Minx P."/>
            <person name="Kyung K."/>
            <person name="Warren W."/>
            <person name="Fulton R."/>
            <person name="Feng D."/>
            <person name="Wollam A."/>
            <person name="Shah N."/>
            <person name="Bhonagiri V."/>
            <person name="Nash W.E."/>
            <person name="Hallsworth-Pepin K."/>
            <person name="Wilson R.K."/>
            <person name="McClelland M."/>
            <person name="Forsythe S.J."/>
        </authorList>
    </citation>
    <scope>NUCLEOTIDE SEQUENCE [LARGE SCALE GENOMIC DNA]</scope>
    <source>
        <strain>ATCC BAA-894</strain>
    </source>
</reference>
<accession>A7MNZ6</accession>
<protein>
    <recommendedName>
        <fullName evidence="1">Protein nucleotidyltransferase YdiU</fullName>
        <ecNumber evidence="1">2.7.7.-</ecNumber>
    </recommendedName>
    <alternativeName>
        <fullName evidence="1">Protein adenylyltransferase YdiU</fullName>
        <ecNumber evidence="1">2.7.7.108</ecNumber>
    </alternativeName>
    <alternativeName>
        <fullName evidence="1">Protein uridylyltransferase YdiU</fullName>
        <ecNumber evidence="1">2.7.7.-</ecNumber>
    </alternativeName>
</protein>
<organism>
    <name type="scientific">Cronobacter sakazakii (strain ATCC BAA-894)</name>
    <name type="common">Enterobacter sakazakii</name>
    <dbReference type="NCBI Taxonomy" id="290339"/>
    <lineage>
        <taxon>Bacteria</taxon>
        <taxon>Pseudomonadati</taxon>
        <taxon>Pseudomonadota</taxon>
        <taxon>Gammaproteobacteria</taxon>
        <taxon>Enterobacterales</taxon>
        <taxon>Enterobacteriaceae</taxon>
        <taxon>Cronobacter</taxon>
    </lineage>
</organism>
<keyword id="KW-0067">ATP-binding</keyword>
<keyword id="KW-0460">Magnesium</keyword>
<keyword id="KW-0464">Manganese</keyword>
<keyword id="KW-0479">Metal-binding</keyword>
<keyword id="KW-0547">Nucleotide-binding</keyword>
<keyword id="KW-0548">Nucleotidyltransferase</keyword>
<keyword id="KW-1185">Reference proteome</keyword>
<keyword id="KW-0808">Transferase</keyword>
<sequence length="482" mass="54946">MSQHPRFIATWRDELPGFYTELTPTPLNNSRLLCHNAPLAQALELPETLFDYQGPAGVWGGETLLPGMAPLAQVYSGHQFGVWAGQLGDGRGILLGEQQLSDGCKLDWHLKGAGLTPYSRMGDGRAVLRSTVREFLASEAMHGLGIPTTRALTIVTSDTPVRRETTERGAMLMRIAESHVRFGHFEHFYYRREPERVRELAQYVIEHHFAHLAQEEDRFALWFGEVVTRTAQLMASWQCVGFAHGVMNTDNMSILGLTMDYGPYGFLDDYQPGFICNHTDYQGRYAFDNQPGVGLWNLQRLAQALSPIIPAERLNALLDDYQPALLREWGRQMRAKLGFTVEKEGDNDYLRELLTLMAREGSDYTRTFRMLSETEQHSSASPLRDEFIDRATFDAWFARYRARLEEEGEEDDARQRLMKSVNPALVLRNWLAQRAIEAAERDDASELSRLLEALRNPFADRDDDYTHRPPDWGKHLEVSCSS</sequence>